<proteinExistence type="evidence at protein level"/>
<organism>
    <name type="scientific">Oryza glaberrima</name>
    <name type="common">African rice</name>
    <dbReference type="NCBI Taxonomy" id="4538"/>
    <lineage>
        <taxon>Eukaryota</taxon>
        <taxon>Viridiplantae</taxon>
        <taxon>Streptophyta</taxon>
        <taxon>Embryophyta</taxon>
        <taxon>Tracheophyta</taxon>
        <taxon>Spermatophyta</taxon>
        <taxon>Magnoliopsida</taxon>
        <taxon>Liliopsida</taxon>
        <taxon>Poales</taxon>
        <taxon>Poaceae</taxon>
        <taxon>BOP clade</taxon>
        <taxon>Oryzoideae</taxon>
        <taxon>Oryzeae</taxon>
        <taxon>Oryzinae</taxon>
        <taxon>Oryza</taxon>
    </lineage>
</organism>
<accession>Q42968</accession>
<accession>Q9S7R1</accession>
<name>SSG1_ORYGL</name>
<dbReference type="EC" id="2.4.1.242"/>
<dbReference type="EMBL" id="D10472">
    <property type="protein sequence ID" value="BAA01272.1"/>
    <property type="molecule type" value="Genomic_DNA"/>
</dbReference>
<dbReference type="SMR" id="Q42968"/>
<dbReference type="STRING" id="4538.Q42968"/>
<dbReference type="CAZy" id="GT5">
    <property type="family name" value="Glycosyltransferase Family 5"/>
</dbReference>
<dbReference type="EnsemblPlants" id="ORGLA06G0020500.1">
    <property type="protein sequence ID" value="ORGLA06G0020500.1"/>
    <property type="gene ID" value="ORGLA06G0020500"/>
</dbReference>
<dbReference type="Gramene" id="ORGLA06G0020500.1">
    <property type="protein sequence ID" value="ORGLA06G0020500.1"/>
    <property type="gene ID" value="ORGLA06G0020500"/>
</dbReference>
<dbReference type="eggNOG" id="ENOG502QQX3">
    <property type="taxonomic scope" value="Eukaryota"/>
</dbReference>
<dbReference type="HOGENOM" id="CLU_009583_18_2_1"/>
<dbReference type="OMA" id="GTDYKDN"/>
<dbReference type="UniPathway" id="UPA00152"/>
<dbReference type="Proteomes" id="UP000007306">
    <property type="component" value="Chromosome 6"/>
</dbReference>
<dbReference type="GO" id="GO:0009501">
    <property type="term" value="C:amyloplast"/>
    <property type="evidence" value="ECO:0000250"/>
    <property type="project" value="Gramene"/>
</dbReference>
<dbReference type="GO" id="GO:0009507">
    <property type="term" value="C:chloroplast"/>
    <property type="evidence" value="ECO:0007669"/>
    <property type="project" value="UniProtKB-SubCell"/>
</dbReference>
<dbReference type="GO" id="GO:0043531">
    <property type="term" value="F:ADP binding"/>
    <property type="evidence" value="ECO:0007669"/>
    <property type="project" value="EnsemblPlants"/>
</dbReference>
<dbReference type="GO" id="GO:0004373">
    <property type="term" value="F:alpha-1,4-glucan glucosyltransferase (UDP-glucose donor) activity"/>
    <property type="evidence" value="ECO:0000250"/>
    <property type="project" value="Gramene"/>
</dbReference>
<dbReference type="GO" id="GO:0019863">
    <property type="term" value="F:IgE binding"/>
    <property type="evidence" value="ECO:0007669"/>
    <property type="project" value="EnsemblPlants"/>
</dbReference>
<dbReference type="GO" id="GO:0019252">
    <property type="term" value="P:starch biosynthetic process"/>
    <property type="evidence" value="ECO:0007669"/>
    <property type="project" value="UniProtKB-UniPathway"/>
</dbReference>
<dbReference type="GO" id="GO:0005982">
    <property type="term" value="P:starch metabolic process"/>
    <property type="evidence" value="ECO:0000250"/>
    <property type="project" value="Gramene"/>
</dbReference>
<dbReference type="CDD" id="cd03791">
    <property type="entry name" value="GT5_Glycogen_synthase_DULL1-like"/>
    <property type="match status" value="1"/>
</dbReference>
<dbReference type="FunFam" id="3.40.50.2000:FF:000073">
    <property type="entry name" value="Starch synthase, chloroplastic/amyloplastic"/>
    <property type="match status" value="1"/>
</dbReference>
<dbReference type="FunFam" id="3.40.50.2000:FF:000090">
    <property type="entry name" value="Starch synthase, chloroplastic/amyloplastic"/>
    <property type="match status" value="1"/>
</dbReference>
<dbReference type="Gene3D" id="3.40.50.2000">
    <property type="entry name" value="Glycogen Phosphorylase B"/>
    <property type="match status" value="2"/>
</dbReference>
<dbReference type="HAMAP" id="MF_00484">
    <property type="entry name" value="Glycogen_synth"/>
    <property type="match status" value="1"/>
</dbReference>
<dbReference type="InterPro" id="IPR001296">
    <property type="entry name" value="Glyco_trans_1"/>
</dbReference>
<dbReference type="InterPro" id="IPR011835">
    <property type="entry name" value="GS/SS"/>
</dbReference>
<dbReference type="InterPro" id="IPR013534">
    <property type="entry name" value="Starch_synth_cat_dom"/>
</dbReference>
<dbReference type="NCBIfam" id="TIGR02095">
    <property type="entry name" value="glgA"/>
    <property type="match status" value="1"/>
</dbReference>
<dbReference type="PANTHER" id="PTHR45825">
    <property type="entry name" value="GRANULE-BOUND STARCH SYNTHASE 1, CHLOROPLASTIC/AMYLOPLASTIC"/>
    <property type="match status" value="1"/>
</dbReference>
<dbReference type="PANTHER" id="PTHR45825:SF3">
    <property type="entry name" value="GRANULE-BOUND STARCH SYNTHASE 1, CHLOROPLASTIC_AMYLOPLASTIC"/>
    <property type="match status" value="1"/>
</dbReference>
<dbReference type="Pfam" id="PF08323">
    <property type="entry name" value="Glyco_transf_5"/>
    <property type="match status" value="1"/>
</dbReference>
<dbReference type="Pfam" id="PF00534">
    <property type="entry name" value="Glycos_transf_1"/>
    <property type="match status" value="1"/>
</dbReference>
<dbReference type="SUPFAM" id="SSF53756">
    <property type="entry name" value="UDP-Glycosyltransferase/glycogen phosphorylase"/>
    <property type="match status" value="1"/>
</dbReference>
<protein>
    <recommendedName>
        <fullName>Granule-bound starch synthase 1, chloroplastic/amyloplastic</fullName>
        <ecNumber>2.4.1.242</ecNumber>
    </recommendedName>
    <alternativeName>
        <fullName>Granule-bound starch synthase I</fullName>
        <shortName>GBSS-I</shortName>
    </alternativeName>
</protein>
<sequence length="609" mass="66475">MSALTTSQLATSATGFGIADRSAPSSLLRHGFQGLKPRSPAGGDATSLSVTTSARATPKQQRSVQRGSRRFPSVVVYATGAGMNVVFVGAEMAPWSKTGGLGDVLGGLPPAMAANGHRVMVISPRYDQYKDAWDTSVVAEIKVADRYERVRFFHCYKRGVDRVFIDHPSFLEKVWGKTGEKIYGPDTGVDYKDNQMRFSLLCQAALEAPRILNLNNNPYFKGTYGEDVVFVCNDWHTGPLASYLKNNYQPNGIYRNAKVAFCIHNISYQGRFAFEDYPELNLSERFRSSFDFIDGYDTPVEGRKINWMKAGILEADRVLTVSPYYAEELISGIARGCELDNIMRLTGITGIVNGMDVSEWDPSKDKYITAKYDATTAIEAKALNKEALQAEAGLPVDRKIPLIAFIGRLEEQKGPDVMAAAIPELMQEDVQIVLLGTGKKKFEKLLKSMEEKYPGKVRAVVKFNAPLAHLIMAGADVLAVPSRFEPCGLIQLQGMRYGTPCACASTGGLVDTVIEGKTGFHMGRLSVNCKVVEPSDVKKVAATLKRAIKVVGTPAYEEMVRNCMNQDLSWKGPAKNWENVLLGLGVAGSAPGIEGDEIAPLAKENVAAP</sequence>
<gene>
    <name type="primary">WAXY</name>
</gene>
<comment type="function">
    <text>Required for the synthesis of amylose in endosperm.</text>
</comment>
<comment type="catalytic activity">
    <reaction>
        <text>an NDP-alpha-D-glucose + [(1-&gt;4)-alpha-D-glucosyl](n) = [(1-&gt;4)-alpha-D-glucosyl](n+1) + a ribonucleoside 5'-diphosphate + H(+)</text>
        <dbReference type="Rhea" id="RHEA:15873"/>
        <dbReference type="Rhea" id="RHEA-COMP:9584"/>
        <dbReference type="Rhea" id="RHEA-COMP:9587"/>
        <dbReference type="ChEBI" id="CHEBI:15378"/>
        <dbReference type="ChEBI" id="CHEBI:15444"/>
        <dbReference type="ChEBI" id="CHEBI:57930"/>
        <dbReference type="ChEBI" id="CHEBI:76533"/>
        <dbReference type="EC" id="2.4.1.242"/>
    </reaction>
</comment>
<comment type="pathway">
    <text>Glycan biosynthesis; starch biosynthesis.</text>
</comment>
<comment type="subcellular location">
    <subcellularLocation>
        <location>Plastid</location>
        <location>Chloroplast</location>
    </subcellularLocation>
    <subcellularLocation>
        <location>Plastid</location>
        <location>Amyloplast</location>
    </subcellularLocation>
    <text>Amyloplast or chloroplast, granule-bound.</text>
</comment>
<comment type="similarity">
    <text evidence="4">Belongs to the glycosyltransferase 1 family. Bacterial/plant glycogen synthase subfamily.</text>
</comment>
<keyword id="KW-0035">Amyloplast</keyword>
<keyword id="KW-0150">Chloroplast</keyword>
<keyword id="KW-0903">Direct protein sequencing</keyword>
<keyword id="KW-0328">Glycosyltransferase</keyword>
<keyword id="KW-0934">Plastid</keyword>
<keyword id="KW-0750">Starch biosynthesis</keyword>
<keyword id="KW-0808">Transferase</keyword>
<keyword id="KW-0809">Transit peptide</keyword>
<reference key="1">
    <citation type="journal article" date="1991" name="Jpn. J. Genet.">
        <title>Diversification of the rice Waxy gene by insertion of mobile DNA elements into introns.</title>
        <authorList>
            <person name="Umeda M."/>
            <person name="Ohtsubo H."/>
            <person name="Ohtsubo E."/>
        </authorList>
    </citation>
    <scope>NUCLEOTIDE SEQUENCE [GENOMIC DNA]</scope>
    <source>
        <strain>cv. GMS1</strain>
    </source>
</reference>
<reference key="2">
    <citation type="journal article" date="1995" name="Biochem. Genet.">
        <title>Variation in the primary structure of waxy proteins (granule-bound starch synthase) in diploid cereals.</title>
        <authorList>
            <person name="Taira T."/>
            <person name="Fujita N."/>
            <person name="Takaoka K."/>
            <person name="Uematsu M."/>
            <person name="Wadano A."/>
            <person name="Kozaki S."/>
            <person name="Okabe S."/>
        </authorList>
    </citation>
    <scope>PROTEIN SEQUENCE OF 78-94</scope>
</reference>
<feature type="transit peptide" description="Chloroplast" evidence="3">
    <location>
        <begin position="1"/>
        <end position="77"/>
    </location>
</feature>
<feature type="chain" id="PRO_0000011131" description="Granule-bound starch synthase 1, chloroplastic/amyloplastic">
    <location>
        <begin position="78"/>
        <end position="609"/>
    </location>
</feature>
<feature type="region of interest" description="Disordered" evidence="2">
    <location>
        <begin position="29"/>
        <end position="67"/>
    </location>
</feature>
<feature type="compositionally biased region" description="Polar residues" evidence="2">
    <location>
        <begin position="46"/>
        <end position="66"/>
    </location>
</feature>
<feature type="binding site" evidence="1">
    <location>
        <position position="97"/>
    </location>
    <ligand>
        <name>ADP-alpha-D-glucose</name>
        <dbReference type="ChEBI" id="CHEBI:57498"/>
    </ligand>
</feature>
<evidence type="ECO:0000250" key="1"/>
<evidence type="ECO:0000256" key="2">
    <source>
        <dbReference type="SAM" id="MobiDB-lite"/>
    </source>
</evidence>
<evidence type="ECO:0000269" key="3">
    <source>
    </source>
</evidence>
<evidence type="ECO:0000305" key="4"/>